<keyword id="KW-0131">Cell cycle</keyword>
<keyword id="KW-0132">Cell division</keyword>
<keyword id="KW-0997">Cell inner membrane</keyword>
<keyword id="KW-1003">Cell membrane</keyword>
<keyword id="KW-0449">Lipoprotein</keyword>
<keyword id="KW-0472">Membrane</keyword>
<keyword id="KW-0564">Palmitate</keyword>
<keyword id="KW-1185">Reference proteome</keyword>
<keyword id="KW-0677">Repeat</keyword>
<keyword id="KW-0732">Signal</keyword>
<feature type="signal peptide" evidence="2">
    <location>
        <begin position="1"/>
        <end position="25"/>
    </location>
</feature>
<feature type="chain" id="PRO_0000018032" description="Murein hydrolase activator NlpD">
    <location>
        <begin position="26"/>
        <end position="377"/>
    </location>
</feature>
<feature type="domain" description="LysM" evidence="3">
    <location>
        <begin position="119"/>
        <end position="163"/>
    </location>
</feature>
<feature type="repeat" description="1">
    <location>
        <begin position="203"/>
        <end position="209"/>
    </location>
</feature>
<feature type="repeat" description="2">
    <location>
        <begin position="225"/>
        <end position="231"/>
    </location>
</feature>
<feature type="repeat" description="3">
    <location>
        <begin position="237"/>
        <end position="243"/>
    </location>
</feature>
<feature type="repeat" description="4">
    <location>
        <begin position="244"/>
        <end position="250"/>
    </location>
</feature>
<feature type="region of interest" description="Disordered" evidence="4">
    <location>
        <begin position="30"/>
        <end position="93"/>
    </location>
</feature>
<feature type="region of interest" description="4 X 7 AA approximate repeats">
    <location>
        <begin position="203"/>
        <end position="250"/>
    </location>
</feature>
<feature type="compositionally biased region" description="Low complexity" evidence="4">
    <location>
        <begin position="36"/>
        <end position="50"/>
    </location>
</feature>
<feature type="compositionally biased region" description="Low complexity" evidence="4">
    <location>
        <begin position="62"/>
        <end position="77"/>
    </location>
</feature>
<feature type="compositionally biased region" description="Polar residues" evidence="4">
    <location>
        <begin position="79"/>
        <end position="93"/>
    </location>
</feature>
<feature type="lipid moiety-binding region" description="N-palmitoyl cysteine" evidence="2">
    <location>
        <position position="26"/>
    </location>
</feature>
<feature type="lipid moiety-binding region" description="S-diacylglycerol cysteine" evidence="2">
    <location>
        <position position="26"/>
    </location>
</feature>
<feature type="sequence conflict" description="In Ref. 2; U05011." evidence="5" ref="2">
    <original>R</original>
    <variation>P</variation>
    <location>
        <position position="377"/>
    </location>
</feature>
<name>NLPD_SALTY</name>
<evidence type="ECO:0000250" key="1"/>
<evidence type="ECO:0000255" key="2">
    <source>
        <dbReference type="PROSITE-ProRule" id="PRU00303"/>
    </source>
</evidence>
<evidence type="ECO:0000255" key="3">
    <source>
        <dbReference type="PROSITE-ProRule" id="PRU01118"/>
    </source>
</evidence>
<evidence type="ECO:0000256" key="4">
    <source>
        <dbReference type="SAM" id="MobiDB-lite"/>
    </source>
</evidence>
<evidence type="ECO:0000305" key="5"/>
<reference key="1">
    <citation type="journal article" date="2001" name="Nature">
        <title>Complete genome sequence of Salmonella enterica serovar Typhimurium LT2.</title>
        <authorList>
            <person name="McClelland M."/>
            <person name="Sanderson K.E."/>
            <person name="Spieth J."/>
            <person name="Clifton S.W."/>
            <person name="Latreille P."/>
            <person name="Courtney L."/>
            <person name="Porwollik S."/>
            <person name="Ali J."/>
            <person name="Dante M."/>
            <person name="Du F."/>
            <person name="Hou S."/>
            <person name="Layman D."/>
            <person name="Leonard S."/>
            <person name="Nguyen C."/>
            <person name="Scott K."/>
            <person name="Holmes A."/>
            <person name="Grewal N."/>
            <person name="Mulvaney E."/>
            <person name="Ryan E."/>
            <person name="Sun H."/>
            <person name="Florea L."/>
            <person name="Miller W."/>
            <person name="Stoneking T."/>
            <person name="Nhan M."/>
            <person name="Waterston R."/>
            <person name="Wilson R.K."/>
        </authorList>
    </citation>
    <scope>NUCLEOTIDE SEQUENCE [LARGE SCALE GENOMIC DNA]</scope>
    <source>
        <strain>LT2 / SGSC1412 / ATCC 700720</strain>
    </source>
</reference>
<reference key="2">
    <citation type="journal article" date="1994" name="Biochim. Biophys. Acta">
        <title>Cloning and sequencing of the gene encoding the RpoS (KatF) sigma factor from Salmonella typhimurium 14028s.</title>
        <authorList>
            <person name="Prince R.W."/>
            <person name="Fang F.C."/>
            <person name="Libby S.J."/>
        </authorList>
    </citation>
    <scope>NUCLEOTIDE SEQUENCE [GENOMIC DNA] OF 280-377</scope>
    <source>
        <strain>ATCC 14028s / SGSG 2262</strain>
    </source>
</reference>
<reference key="3">
    <citation type="journal article" date="1994" name="J. Bacteriol.">
        <title>The Salmonella typhimurium katF (rpoS) gene: cloning, nucleotide sequence, and regulation of spvR and spvABCD virulence plasmid genes.</title>
        <authorList>
            <person name="Kowarz L."/>
            <person name="Coynault C."/>
            <person name="Robbe-Saule V."/>
            <person name="Norel F."/>
        </authorList>
    </citation>
    <scope>NUCLEOTIDE SEQUENCE [GENOMIC DNA] OF 298-377</scope>
    <source>
        <strain>C52</strain>
    </source>
</reference>
<dbReference type="EMBL" id="AE006468">
    <property type="protein sequence ID" value="AAL21805.1"/>
    <property type="molecule type" value="Genomic_DNA"/>
</dbReference>
<dbReference type="EMBL" id="U05011">
    <property type="status" value="NOT_ANNOTATED_CDS"/>
    <property type="molecule type" value="Genomic_DNA"/>
</dbReference>
<dbReference type="EMBL" id="X77752">
    <property type="status" value="NOT_ANNOTATED_CDS"/>
    <property type="molecule type" value="Genomic_DNA"/>
</dbReference>
<dbReference type="PIR" id="S58445">
    <property type="entry name" value="S58445"/>
</dbReference>
<dbReference type="RefSeq" id="NP_461846.1">
    <property type="nucleotide sequence ID" value="NC_003197.2"/>
</dbReference>
<dbReference type="RefSeq" id="WP_001272632.1">
    <property type="nucleotide sequence ID" value="NC_003197.2"/>
</dbReference>
<dbReference type="SMR" id="P40827"/>
<dbReference type="STRING" id="99287.STM2925"/>
<dbReference type="PaxDb" id="99287-STM2925"/>
<dbReference type="GeneID" id="1254448"/>
<dbReference type="KEGG" id="stm:STM2925"/>
<dbReference type="PATRIC" id="fig|99287.12.peg.3079"/>
<dbReference type="HOGENOM" id="CLU_029425_0_1_6"/>
<dbReference type="OMA" id="YAHNDKI"/>
<dbReference type="PhylomeDB" id="P40827"/>
<dbReference type="BioCyc" id="SENT99287:STM2925-MONOMER"/>
<dbReference type="Proteomes" id="UP000001014">
    <property type="component" value="Chromosome"/>
</dbReference>
<dbReference type="GO" id="GO:0032153">
    <property type="term" value="C:cell division site"/>
    <property type="evidence" value="ECO:0000318"/>
    <property type="project" value="GO_Central"/>
</dbReference>
<dbReference type="GO" id="GO:0009279">
    <property type="term" value="C:cell outer membrane"/>
    <property type="evidence" value="ECO:0000318"/>
    <property type="project" value="GO_Central"/>
</dbReference>
<dbReference type="GO" id="GO:0005886">
    <property type="term" value="C:plasma membrane"/>
    <property type="evidence" value="ECO:0007669"/>
    <property type="project" value="UniProtKB-SubCell"/>
</dbReference>
<dbReference type="GO" id="GO:0004222">
    <property type="term" value="F:metalloendopeptidase activity"/>
    <property type="evidence" value="ECO:0000318"/>
    <property type="project" value="GO_Central"/>
</dbReference>
<dbReference type="GO" id="GO:0051301">
    <property type="term" value="P:cell division"/>
    <property type="evidence" value="ECO:0007669"/>
    <property type="project" value="UniProtKB-KW"/>
</dbReference>
<dbReference type="CDD" id="cd00118">
    <property type="entry name" value="LysM"/>
    <property type="match status" value="1"/>
</dbReference>
<dbReference type="CDD" id="cd12797">
    <property type="entry name" value="M23_peptidase"/>
    <property type="match status" value="1"/>
</dbReference>
<dbReference type="FunFam" id="3.10.350.10:FF:000008">
    <property type="entry name" value="Murein hydrolase activator NlpD"/>
    <property type="match status" value="1"/>
</dbReference>
<dbReference type="FunFam" id="2.70.70.10:FF:000004">
    <property type="entry name" value="NlpD family lipoprotein"/>
    <property type="match status" value="1"/>
</dbReference>
<dbReference type="Gene3D" id="2.70.70.10">
    <property type="entry name" value="Glucose Permease (Domain IIA)"/>
    <property type="match status" value="1"/>
</dbReference>
<dbReference type="Gene3D" id="3.10.350.10">
    <property type="entry name" value="LysM domain"/>
    <property type="match status" value="1"/>
</dbReference>
<dbReference type="InterPro" id="IPR050570">
    <property type="entry name" value="Cell_wall_metabolism_enzyme"/>
</dbReference>
<dbReference type="InterPro" id="IPR011055">
    <property type="entry name" value="Dup_hybrid_motif"/>
</dbReference>
<dbReference type="InterPro" id="IPR018392">
    <property type="entry name" value="LysM_dom"/>
</dbReference>
<dbReference type="InterPro" id="IPR036779">
    <property type="entry name" value="LysM_dom_sf"/>
</dbReference>
<dbReference type="InterPro" id="IPR016047">
    <property type="entry name" value="Peptidase_M23"/>
</dbReference>
<dbReference type="NCBIfam" id="NF008123">
    <property type="entry name" value="PRK10871.1"/>
    <property type="match status" value="1"/>
</dbReference>
<dbReference type="PANTHER" id="PTHR21666:SF263">
    <property type="entry name" value="MUREIN HYDROLASE ACTIVATOR NLPD"/>
    <property type="match status" value="1"/>
</dbReference>
<dbReference type="PANTHER" id="PTHR21666">
    <property type="entry name" value="PEPTIDASE-RELATED"/>
    <property type="match status" value="1"/>
</dbReference>
<dbReference type="Pfam" id="PF01476">
    <property type="entry name" value="LysM"/>
    <property type="match status" value="1"/>
</dbReference>
<dbReference type="Pfam" id="PF01551">
    <property type="entry name" value="Peptidase_M23"/>
    <property type="match status" value="1"/>
</dbReference>
<dbReference type="SMART" id="SM00257">
    <property type="entry name" value="LysM"/>
    <property type="match status" value="1"/>
</dbReference>
<dbReference type="SUPFAM" id="SSF51261">
    <property type="entry name" value="Duplicated hybrid motif"/>
    <property type="match status" value="1"/>
</dbReference>
<dbReference type="PROSITE" id="PS51782">
    <property type="entry name" value="LYSM"/>
    <property type="match status" value="1"/>
</dbReference>
<dbReference type="PROSITE" id="PS51257">
    <property type="entry name" value="PROKAR_LIPOPROTEIN"/>
    <property type="match status" value="1"/>
</dbReference>
<comment type="function">
    <text evidence="1">Activator of the cell wall hydrolase AmiC. Required for septal murein cleavage and daughter cell separation during cell division (By similarity).</text>
</comment>
<comment type="subcellular location">
    <subcellularLocation>
        <location evidence="5">Cell inner membrane</location>
        <topology evidence="2">Lipid-anchor</topology>
    </subcellularLocation>
    <text evidence="1">Localizes at the septal ring.</text>
</comment>
<comment type="similarity">
    <text evidence="5">Belongs to the E.coli NlpD/Haemophilus LppB family.</text>
</comment>
<sequence length="377" mass="39641">MSAGSPKFTVSRIAALSLVSLWLAGCTSSSNPPAPVTSVDSGSSSNTNSGMLITPPPKMGATTQQTPQQAPQIQPVQRPVTQPMQTQPVTEQPVQMENGRIVYNRQYGNIPKGSYTGGSTYTVKKGDTLFYIAWITGNDFRDLAQRNSISAPYSLNVGQTLQVGNASGTPITGGNAITQADAAQQGVVTRSAQNSTVAVASQPTITYSEGSGEQSANKMLPNNKPAGTVVTAPVTAPTVSTTEPNASSTSTSAPISAWRWPTDGKVIENFGASEGGNKGIDIAGSKGQAIVATADGRVVYAGNALRGYGNLIIIKHNDDYLSAYAHNDTMLVREQQEVKAGQKIATMGSTGTSSTRLHFEIRYKGKSVNPLRYLPQR</sequence>
<organism>
    <name type="scientific">Salmonella typhimurium (strain LT2 / SGSC1412 / ATCC 700720)</name>
    <dbReference type="NCBI Taxonomy" id="99287"/>
    <lineage>
        <taxon>Bacteria</taxon>
        <taxon>Pseudomonadati</taxon>
        <taxon>Pseudomonadota</taxon>
        <taxon>Gammaproteobacteria</taxon>
        <taxon>Enterobacterales</taxon>
        <taxon>Enterobacteriaceae</taxon>
        <taxon>Salmonella</taxon>
    </lineage>
</organism>
<accession>P40827</accession>
<gene>
    <name type="primary">nlpD</name>
    <name type="ordered locus">STM2925</name>
</gene>
<protein>
    <recommendedName>
        <fullName>Murein hydrolase activator NlpD</fullName>
    </recommendedName>
</protein>
<proteinExistence type="inferred from homology"/>